<sequence length="565" mass="62938">MKIPEEEVALLEDYVSDSVDHRGFPAGKSSTGGWRSAWFIIGVEVAERFAYFGIACNLITYLTGPLGQSTAKAAVNVNTWSGTASILPILGAFVADAYLGRYRTIVVASLIYILGLGLLTLSASLIIMGLSKQRNDASAKPSIWVNTLFFCSLYLVAIGQGGHKPCVQAFGADQFDAEDPKEVIARGSFFNWWFLSLSAGISISIIVVAYVQENVNWAFGFGIPCLFMVMALAIFLLGRKIYRYPKGHHEEVNSSNTFARIGRVFVIAFKNRKLRLEHSSLELDQGLLEDGQSEKRKDRLNFLAKAMISREGVEPCSGRDVDDAKALVRLIPIWITYVVSTIPYAQYITFFTKQGVTVDRRILPGVEIPAASLLSFVGVSILISVPLYERVFLPIARKITKKPFGITMLQRIGAGMVLSVFNMMLAALVESKRLKIAREHGLVDKPDVTVPMSIWWFVPQYLLLGMIDLFSMVGTQEFFYDQVPTELRSIGLSLSLSAMGLSSFLSGFLISLIDWATGKDGWFNSNLNRAHVDYFYWLLAAFTAIAFFAFLFISKMYVYRRLDQV</sequence>
<dbReference type="EMBL" id="AC006551">
    <property type="protein sequence ID" value="AAF18521.1"/>
    <property type="molecule type" value="Genomic_DNA"/>
</dbReference>
<dbReference type="EMBL" id="CP002684">
    <property type="protein sequence ID" value="AEE30256.1"/>
    <property type="molecule type" value="Genomic_DNA"/>
</dbReference>
<dbReference type="PIR" id="B86359">
    <property type="entry name" value="B86359"/>
</dbReference>
<dbReference type="RefSeq" id="NP_173672.1">
    <property type="nucleotide sequence ID" value="NM_102105.2"/>
</dbReference>
<dbReference type="SMR" id="Q9SK99"/>
<dbReference type="BioGRID" id="24102">
    <property type="interactions" value="7"/>
</dbReference>
<dbReference type="FunCoup" id="Q9SK99">
    <property type="interactions" value="1568"/>
</dbReference>
<dbReference type="IntAct" id="Q9SK99">
    <property type="interactions" value="5"/>
</dbReference>
<dbReference type="PaxDb" id="3702-AT1G22570.1"/>
<dbReference type="ProteomicsDB" id="226437"/>
<dbReference type="EnsemblPlants" id="AT1G22570.1">
    <property type="protein sequence ID" value="AT1G22570.1"/>
    <property type="gene ID" value="AT1G22570"/>
</dbReference>
<dbReference type="GeneID" id="838863"/>
<dbReference type="Gramene" id="AT1G22570.1">
    <property type="protein sequence ID" value="AT1G22570.1"/>
    <property type="gene ID" value="AT1G22570"/>
</dbReference>
<dbReference type="KEGG" id="ath:AT1G22570"/>
<dbReference type="Araport" id="AT1G22570"/>
<dbReference type="TAIR" id="AT1G22570"/>
<dbReference type="eggNOG" id="KOG1237">
    <property type="taxonomic scope" value="Eukaryota"/>
</dbReference>
<dbReference type="HOGENOM" id="CLU_009313_4_1_1"/>
<dbReference type="InParanoid" id="Q9SK99"/>
<dbReference type="OMA" id="LITVIEW"/>
<dbReference type="PhylomeDB" id="Q9SK99"/>
<dbReference type="PRO" id="PR:Q9SK99"/>
<dbReference type="Proteomes" id="UP000006548">
    <property type="component" value="Chromosome 1"/>
</dbReference>
<dbReference type="ExpressionAtlas" id="Q9SK99">
    <property type="expression patterns" value="baseline and differential"/>
</dbReference>
<dbReference type="GO" id="GO:0016020">
    <property type="term" value="C:membrane"/>
    <property type="evidence" value="ECO:0007669"/>
    <property type="project" value="UniProtKB-SubCell"/>
</dbReference>
<dbReference type="GO" id="GO:0071916">
    <property type="term" value="F:dipeptide transmembrane transporter activity"/>
    <property type="evidence" value="ECO:0007669"/>
    <property type="project" value="InterPro"/>
</dbReference>
<dbReference type="GO" id="GO:0042937">
    <property type="term" value="F:tripeptide transmembrane transporter activity"/>
    <property type="evidence" value="ECO:0007669"/>
    <property type="project" value="InterPro"/>
</dbReference>
<dbReference type="CDD" id="cd17417">
    <property type="entry name" value="MFS_NPF5"/>
    <property type="match status" value="1"/>
</dbReference>
<dbReference type="FunFam" id="1.20.1250.20:FF:000147">
    <property type="entry name" value="Protein NRT1/ PTR family 5.10"/>
    <property type="match status" value="1"/>
</dbReference>
<dbReference type="Gene3D" id="1.20.1250.20">
    <property type="entry name" value="MFS general substrate transporter like domains"/>
    <property type="match status" value="1"/>
</dbReference>
<dbReference type="InterPro" id="IPR036259">
    <property type="entry name" value="MFS_trans_sf"/>
</dbReference>
<dbReference type="InterPro" id="IPR044739">
    <property type="entry name" value="NRT1/PTR"/>
</dbReference>
<dbReference type="InterPro" id="IPR000109">
    <property type="entry name" value="POT_fam"/>
</dbReference>
<dbReference type="InterPro" id="IPR018456">
    <property type="entry name" value="PTR2_symporter_CS"/>
</dbReference>
<dbReference type="PANTHER" id="PTHR11654">
    <property type="entry name" value="OLIGOPEPTIDE TRANSPORTER-RELATED"/>
    <property type="match status" value="1"/>
</dbReference>
<dbReference type="Pfam" id="PF00854">
    <property type="entry name" value="PTR2"/>
    <property type="match status" value="1"/>
</dbReference>
<dbReference type="SUPFAM" id="SSF103473">
    <property type="entry name" value="MFS general substrate transporter"/>
    <property type="match status" value="1"/>
</dbReference>
<dbReference type="PROSITE" id="PS01022">
    <property type="entry name" value="PTR2_1"/>
    <property type="match status" value="1"/>
</dbReference>
<evidence type="ECO:0000250" key="1"/>
<evidence type="ECO:0000250" key="2">
    <source>
        <dbReference type="UniProtKB" id="Q05085"/>
    </source>
</evidence>
<evidence type="ECO:0000255" key="3"/>
<evidence type="ECO:0000269" key="4">
    <source>
    </source>
</evidence>
<evidence type="ECO:0000305" key="5"/>
<comment type="subcellular location">
    <subcellularLocation>
        <location evidence="1">Membrane</location>
        <topology evidence="1">Multi-pass membrane protein</topology>
    </subcellularLocation>
</comment>
<comment type="tissue specificity">
    <text evidence="4">Expressed in shoots, roots and leaves.</text>
</comment>
<comment type="similarity">
    <text evidence="5">Belongs to the major facilitator superfamily. Proton-dependent oligopeptide transporter (POT/PTR) (TC 2.A.17) family.</text>
</comment>
<name>PTR11_ARATH</name>
<keyword id="KW-0472">Membrane</keyword>
<keyword id="KW-0597">Phosphoprotein</keyword>
<keyword id="KW-1185">Reference proteome</keyword>
<keyword id="KW-0812">Transmembrane</keyword>
<keyword id="KW-1133">Transmembrane helix</keyword>
<keyword id="KW-0813">Transport</keyword>
<feature type="chain" id="PRO_0000399945" description="Protein NRT1/ PTR FAMILY 5.15">
    <location>
        <begin position="1"/>
        <end position="565"/>
    </location>
</feature>
<feature type="transmembrane region" description="Helical" evidence="3">
    <location>
        <begin position="49"/>
        <end position="67"/>
    </location>
</feature>
<feature type="transmembrane region" description="Helical" evidence="3">
    <location>
        <begin position="80"/>
        <end position="100"/>
    </location>
</feature>
<feature type="transmembrane region" description="Helical" evidence="3">
    <location>
        <begin position="110"/>
        <end position="130"/>
    </location>
</feature>
<feature type="transmembrane region" description="Helical" evidence="3">
    <location>
        <begin position="142"/>
        <end position="162"/>
    </location>
</feature>
<feature type="transmembrane region" description="Helical" evidence="3">
    <location>
        <begin position="189"/>
        <end position="209"/>
    </location>
</feature>
<feature type="transmembrane region" description="Helical" evidence="3">
    <location>
        <begin position="217"/>
        <end position="237"/>
    </location>
</feature>
<feature type="transmembrane region" description="Helical" evidence="3">
    <location>
        <begin position="331"/>
        <end position="351"/>
    </location>
</feature>
<feature type="transmembrane region" description="Helical" evidence="3">
    <location>
        <begin position="368"/>
        <end position="388"/>
    </location>
</feature>
<feature type="transmembrane region" description="Helical" evidence="3">
    <location>
        <begin position="409"/>
        <end position="429"/>
    </location>
</feature>
<feature type="transmembrane region" description="Helical" evidence="3">
    <location>
        <begin position="454"/>
        <end position="474"/>
    </location>
</feature>
<feature type="transmembrane region" description="Helical" evidence="3">
    <location>
        <begin position="490"/>
        <end position="510"/>
    </location>
</feature>
<feature type="transmembrane region" description="Helical" evidence="3">
    <location>
        <begin position="534"/>
        <end position="554"/>
    </location>
</feature>
<feature type="modified residue" description="Phosphothreonine" evidence="2">
    <location>
        <position position="104"/>
    </location>
</feature>
<organism>
    <name type="scientific">Arabidopsis thaliana</name>
    <name type="common">Mouse-ear cress</name>
    <dbReference type="NCBI Taxonomy" id="3702"/>
    <lineage>
        <taxon>Eukaryota</taxon>
        <taxon>Viridiplantae</taxon>
        <taxon>Streptophyta</taxon>
        <taxon>Embryophyta</taxon>
        <taxon>Tracheophyta</taxon>
        <taxon>Spermatophyta</taxon>
        <taxon>Magnoliopsida</taxon>
        <taxon>eudicotyledons</taxon>
        <taxon>Gunneridae</taxon>
        <taxon>Pentapetalae</taxon>
        <taxon>rosids</taxon>
        <taxon>malvids</taxon>
        <taxon>Brassicales</taxon>
        <taxon>Brassicaceae</taxon>
        <taxon>Camelineae</taxon>
        <taxon>Arabidopsis</taxon>
    </lineage>
</organism>
<gene>
    <name type="primary">NPF5.15</name>
    <name type="ordered locus">At1g22570</name>
    <name type="ORF">F12K8.8</name>
</gene>
<proteinExistence type="evidence at transcript level"/>
<accession>Q9SK99</accession>
<protein>
    <recommendedName>
        <fullName>Protein NRT1/ PTR FAMILY 5.15</fullName>
        <shortName>AtNPF5.15</shortName>
    </recommendedName>
</protein>
<reference key="1">
    <citation type="journal article" date="2000" name="Nature">
        <title>Sequence and analysis of chromosome 1 of the plant Arabidopsis thaliana.</title>
        <authorList>
            <person name="Theologis A."/>
            <person name="Ecker J.R."/>
            <person name="Palm C.J."/>
            <person name="Federspiel N.A."/>
            <person name="Kaul S."/>
            <person name="White O."/>
            <person name="Alonso J."/>
            <person name="Altafi H."/>
            <person name="Araujo R."/>
            <person name="Bowman C.L."/>
            <person name="Brooks S.Y."/>
            <person name="Buehler E."/>
            <person name="Chan A."/>
            <person name="Chao Q."/>
            <person name="Chen H."/>
            <person name="Cheuk R.F."/>
            <person name="Chin C.W."/>
            <person name="Chung M.K."/>
            <person name="Conn L."/>
            <person name="Conway A.B."/>
            <person name="Conway A.R."/>
            <person name="Creasy T.H."/>
            <person name="Dewar K."/>
            <person name="Dunn P."/>
            <person name="Etgu P."/>
            <person name="Feldblyum T.V."/>
            <person name="Feng J.-D."/>
            <person name="Fong B."/>
            <person name="Fujii C.Y."/>
            <person name="Gill J.E."/>
            <person name="Goldsmith A.D."/>
            <person name="Haas B."/>
            <person name="Hansen N.F."/>
            <person name="Hughes B."/>
            <person name="Huizar L."/>
            <person name="Hunter J.L."/>
            <person name="Jenkins J."/>
            <person name="Johnson-Hopson C."/>
            <person name="Khan S."/>
            <person name="Khaykin E."/>
            <person name="Kim C.J."/>
            <person name="Koo H.L."/>
            <person name="Kremenetskaia I."/>
            <person name="Kurtz D.B."/>
            <person name="Kwan A."/>
            <person name="Lam B."/>
            <person name="Langin-Hooper S."/>
            <person name="Lee A."/>
            <person name="Lee J.M."/>
            <person name="Lenz C.A."/>
            <person name="Li J.H."/>
            <person name="Li Y.-P."/>
            <person name="Lin X."/>
            <person name="Liu S.X."/>
            <person name="Liu Z.A."/>
            <person name="Luros J.S."/>
            <person name="Maiti R."/>
            <person name="Marziali A."/>
            <person name="Militscher J."/>
            <person name="Miranda M."/>
            <person name="Nguyen M."/>
            <person name="Nierman W.C."/>
            <person name="Osborne B.I."/>
            <person name="Pai G."/>
            <person name="Peterson J."/>
            <person name="Pham P.K."/>
            <person name="Rizzo M."/>
            <person name="Rooney T."/>
            <person name="Rowley D."/>
            <person name="Sakano H."/>
            <person name="Salzberg S.L."/>
            <person name="Schwartz J.R."/>
            <person name="Shinn P."/>
            <person name="Southwick A.M."/>
            <person name="Sun H."/>
            <person name="Tallon L.J."/>
            <person name="Tambunga G."/>
            <person name="Toriumi M.J."/>
            <person name="Town C.D."/>
            <person name="Utterback T."/>
            <person name="Van Aken S."/>
            <person name="Vaysberg M."/>
            <person name="Vysotskaia V.S."/>
            <person name="Walker M."/>
            <person name="Wu D."/>
            <person name="Yu G."/>
            <person name="Fraser C.M."/>
            <person name="Venter J.C."/>
            <person name="Davis R.W."/>
        </authorList>
    </citation>
    <scope>NUCLEOTIDE SEQUENCE [LARGE SCALE GENOMIC DNA]</scope>
    <source>
        <strain>cv. Columbia</strain>
    </source>
</reference>
<reference key="2">
    <citation type="journal article" date="2017" name="Plant J.">
        <title>Araport11: a complete reannotation of the Arabidopsis thaliana reference genome.</title>
        <authorList>
            <person name="Cheng C.Y."/>
            <person name="Krishnakumar V."/>
            <person name="Chan A.P."/>
            <person name="Thibaud-Nissen F."/>
            <person name="Schobel S."/>
            <person name="Town C.D."/>
        </authorList>
    </citation>
    <scope>GENOME REANNOTATION</scope>
    <source>
        <strain>cv. Columbia</strain>
    </source>
</reference>
<reference key="3">
    <citation type="journal article" date="2007" name="FEBS Lett.">
        <title>Nitrate transporters and peptide transporters.</title>
        <authorList>
            <person name="Tsay Y.F."/>
            <person name="Chiu C.C."/>
            <person name="Tsai C.B."/>
            <person name="Ho C.H."/>
            <person name="Hsu P.K."/>
        </authorList>
    </citation>
    <scope>TISSUE SPECIFICITY</scope>
    <scope>GENE FAMILY</scope>
</reference>
<reference key="4">
    <citation type="journal article" date="2010" name="Plant Cell">
        <title>The Arabidopsis nitrate transporter NRT1.8 functions in nitrate removal from the xylem sap and mediates cadmium tolerance.</title>
        <authorList>
            <person name="Li J.Y."/>
            <person name="Fu Y.L."/>
            <person name="Pike S.M."/>
            <person name="Bao J."/>
            <person name="Tian W."/>
            <person name="Zhang Y."/>
            <person name="Chen C.Z."/>
            <person name="Zhang Y."/>
            <person name="Li H.M."/>
            <person name="Huang J."/>
            <person name="Li L.G."/>
            <person name="Schroeder J.I."/>
            <person name="Gassmann W."/>
            <person name="Gong J.M."/>
        </authorList>
    </citation>
    <scope>GENE FAMILY</scope>
</reference>
<reference key="5">
    <citation type="journal article" date="2014" name="Trends Plant Sci.">
        <title>A unified nomenclature of NITRATE TRANSPORTER 1/PEPTIDE TRANSPORTER family members in plants.</title>
        <authorList>
            <person name="Leran S."/>
            <person name="Varala K."/>
            <person name="Boyer J.C."/>
            <person name="Chiurazzi M."/>
            <person name="Crawford N."/>
            <person name="Daniel-Vedele F."/>
            <person name="David L."/>
            <person name="Dickstein R."/>
            <person name="Fernandez E."/>
            <person name="Forde B."/>
            <person name="Gassmann W."/>
            <person name="Geiger D."/>
            <person name="Gojon A."/>
            <person name="Gong J.M."/>
            <person name="Halkier B.A."/>
            <person name="Harris J.M."/>
            <person name="Hedrich R."/>
            <person name="Limami A.M."/>
            <person name="Rentsch D."/>
            <person name="Seo M."/>
            <person name="Tsay Y.F."/>
            <person name="Zhang M."/>
            <person name="Coruzzi G."/>
            <person name="Lacombe B."/>
        </authorList>
    </citation>
    <scope>GENE FAMILY</scope>
    <scope>NOMENCLATURE</scope>
</reference>